<comment type="function">
    <text evidence="1">Catalyzes the formation of S-adenosylmethionine (AdoMet) from methionine and ATP. The overall synthetic reaction is composed of two sequential steps, AdoMet formation and the subsequent tripolyphosphate hydrolysis which occurs prior to release of AdoMet from the enzyme.</text>
</comment>
<comment type="catalytic activity">
    <reaction evidence="1">
        <text>L-methionine + ATP + H2O = S-adenosyl-L-methionine + phosphate + diphosphate</text>
        <dbReference type="Rhea" id="RHEA:21080"/>
        <dbReference type="ChEBI" id="CHEBI:15377"/>
        <dbReference type="ChEBI" id="CHEBI:30616"/>
        <dbReference type="ChEBI" id="CHEBI:33019"/>
        <dbReference type="ChEBI" id="CHEBI:43474"/>
        <dbReference type="ChEBI" id="CHEBI:57844"/>
        <dbReference type="ChEBI" id="CHEBI:59789"/>
        <dbReference type="EC" id="2.5.1.6"/>
    </reaction>
</comment>
<comment type="cofactor">
    <cofactor evidence="1">
        <name>Mg(2+)</name>
        <dbReference type="ChEBI" id="CHEBI:18420"/>
    </cofactor>
    <text evidence="1">Binds 2 divalent ions per subunit.</text>
</comment>
<comment type="cofactor">
    <cofactor evidence="1">
        <name>K(+)</name>
        <dbReference type="ChEBI" id="CHEBI:29103"/>
    </cofactor>
    <text evidence="1">Binds 1 potassium ion per subunit.</text>
</comment>
<comment type="pathway">
    <text evidence="1">Amino-acid biosynthesis; S-adenosyl-L-methionine biosynthesis; S-adenosyl-L-methionine from L-methionine: step 1/1.</text>
</comment>
<comment type="subunit">
    <text evidence="1">Homotetramer; dimer of dimers.</text>
</comment>
<comment type="subcellular location">
    <subcellularLocation>
        <location evidence="1">Cytoplasm</location>
    </subcellularLocation>
</comment>
<comment type="similarity">
    <text evidence="1">Belongs to the AdoMet synthase family.</text>
</comment>
<keyword id="KW-0067">ATP-binding</keyword>
<keyword id="KW-0963">Cytoplasm</keyword>
<keyword id="KW-0460">Magnesium</keyword>
<keyword id="KW-0479">Metal-binding</keyword>
<keyword id="KW-0547">Nucleotide-binding</keyword>
<keyword id="KW-0554">One-carbon metabolism</keyword>
<keyword id="KW-0630">Potassium</keyword>
<keyword id="KW-0808">Transferase</keyword>
<gene>
    <name evidence="1" type="primary">metK</name>
    <name type="ordered locus">DMR_42050</name>
</gene>
<dbReference type="EC" id="2.5.1.6" evidence="1"/>
<dbReference type="EMBL" id="AP010904">
    <property type="protein sequence ID" value="BAH77696.1"/>
    <property type="molecule type" value="Genomic_DNA"/>
</dbReference>
<dbReference type="RefSeq" id="WP_015862821.1">
    <property type="nucleotide sequence ID" value="NC_012796.1"/>
</dbReference>
<dbReference type="SMR" id="C4XPZ6"/>
<dbReference type="STRING" id="573370.DMR_42050"/>
<dbReference type="KEGG" id="dma:DMR_42050"/>
<dbReference type="eggNOG" id="COG0192">
    <property type="taxonomic scope" value="Bacteria"/>
</dbReference>
<dbReference type="HOGENOM" id="CLU_041802_1_1_7"/>
<dbReference type="OrthoDB" id="9801686at2"/>
<dbReference type="UniPathway" id="UPA00315">
    <property type="reaction ID" value="UER00080"/>
</dbReference>
<dbReference type="Proteomes" id="UP000009071">
    <property type="component" value="Chromosome"/>
</dbReference>
<dbReference type="GO" id="GO:0005737">
    <property type="term" value="C:cytoplasm"/>
    <property type="evidence" value="ECO:0007669"/>
    <property type="project" value="UniProtKB-SubCell"/>
</dbReference>
<dbReference type="GO" id="GO:0005524">
    <property type="term" value="F:ATP binding"/>
    <property type="evidence" value="ECO:0007669"/>
    <property type="project" value="UniProtKB-UniRule"/>
</dbReference>
<dbReference type="GO" id="GO:0000287">
    <property type="term" value="F:magnesium ion binding"/>
    <property type="evidence" value="ECO:0007669"/>
    <property type="project" value="UniProtKB-UniRule"/>
</dbReference>
<dbReference type="GO" id="GO:0004478">
    <property type="term" value="F:methionine adenosyltransferase activity"/>
    <property type="evidence" value="ECO:0007669"/>
    <property type="project" value="UniProtKB-UniRule"/>
</dbReference>
<dbReference type="GO" id="GO:0006730">
    <property type="term" value="P:one-carbon metabolic process"/>
    <property type="evidence" value="ECO:0007669"/>
    <property type="project" value="UniProtKB-KW"/>
</dbReference>
<dbReference type="GO" id="GO:0006556">
    <property type="term" value="P:S-adenosylmethionine biosynthetic process"/>
    <property type="evidence" value="ECO:0007669"/>
    <property type="project" value="UniProtKB-UniRule"/>
</dbReference>
<dbReference type="CDD" id="cd18079">
    <property type="entry name" value="S-AdoMet_synt"/>
    <property type="match status" value="1"/>
</dbReference>
<dbReference type="FunFam" id="3.30.300.10:FF:000003">
    <property type="entry name" value="S-adenosylmethionine synthase"/>
    <property type="match status" value="1"/>
</dbReference>
<dbReference type="Gene3D" id="3.30.300.10">
    <property type="match status" value="3"/>
</dbReference>
<dbReference type="HAMAP" id="MF_00086">
    <property type="entry name" value="S_AdoMet_synth1"/>
    <property type="match status" value="1"/>
</dbReference>
<dbReference type="InterPro" id="IPR022631">
    <property type="entry name" value="ADOMET_SYNTHASE_CS"/>
</dbReference>
<dbReference type="InterPro" id="IPR022630">
    <property type="entry name" value="S-AdoMet_synt_C"/>
</dbReference>
<dbReference type="InterPro" id="IPR022629">
    <property type="entry name" value="S-AdoMet_synt_central"/>
</dbReference>
<dbReference type="InterPro" id="IPR022628">
    <property type="entry name" value="S-AdoMet_synt_N"/>
</dbReference>
<dbReference type="InterPro" id="IPR002133">
    <property type="entry name" value="S-AdoMet_synthetase"/>
</dbReference>
<dbReference type="InterPro" id="IPR022636">
    <property type="entry name" value="S-AdoMet_synthetase_sfam"/>
</dbReference>
<dbReference type="NCBIfam" id="TIGR01034">
    <property type="entry name" value="metK"/>
    <property type="match status" value="1"/>
</dbReference>
<dbReference type="PANTHER" id="PTHR11964">
    <property type="entry name" value="S-ADENOSYLMETHIONINE SYNTHETASE"/>
    <property type="match status" value="1"/>
</dbReference>
<dbReference type="Pfam" id="PF02773">
    <property type="entry name" value="S-AdoMet_synt_C"/>
    <property type="match status" value="1"/>
</dbReference>
<dbReference type="Pfam" id="PF02772">
    <property type="entry name" value="S-AdoMet_synt_M"/>
    <property type="match status" value="1"/>
</dbReference>
<dbReference type="Pfam" id="PF00438">
    <property type="entry name" value="S-AdoMet_synt_N"/>
    <property type="match status" value="1"/>
</dbReference>
<dbReference type="PIRSF" id="PIRSF000497">
    <property type="entry name" value="MAT"/>
    <property type="match status" value="1"/>
</dbReference>
<dbReference type="SUPFAM" id="SSF55973">
    <property type="entry name" value="S-adenosylmethionine synthetase"/>
    <property type="match status" value="3"/>
</dbReference>
<dbReference type="PROSITE" id="PS00376">
    <property type="entry name" value="ADOMET_SYNTHASE_1"/>
    <property type="match status" value="1"/>
</dbReference>
<dbReference type="PROSITE" id="PS00377">
    <property type="entry name" value="ADOMET_SYNTHASE_2"/>
    <property type="match status" value="1"/>
</dbReference>
<proteinExistence type="inferred from homology"/>
<feature type="chain" id="PRO_1000202615" description="S-adenosylmethionine synthase">
    <location>
        <begin position="1"/>
        <end position="389"/>
    </location>
</feature>
<feature type="region of interest" description="Flexible loop" evidence="1">
    <location>
        <begin position="103"/>
        <end position="113"/>
    </location>
</feature>
<feature type="binding site" description="in other chain" evidence="1">
    <location>
        <position position="19"/>
    </location>
    <ligand>
        <name>ATP</name>
        <dbReference type="ChEBI" id="CHEBI:30616"/>
        <note>ligand shared between two neighboring subunits</note>
    </ligand>
</feature>
<feature type="binding site" evidence="1">
    <location>
        <position position="21"/>
    </location>
    <ligand>
        <name>Mg(2+)</name>
        <dbReference type="ChEBI" id="CHEBI:18420"/>
    </ligand>
</feature>
<feature type="binding site" evidence="1">
    <location>
        <position position="47"/>
    </location>
    <ligand>
        <name>K(+)</name>
        <dbReference type="ChEBI" id="CHEBI:29103"/>
    </ligand>
</feature>
<feature type="binding site" description="in other chain" evidence="1">
    <location>
        <position position="60"/>
    </location>
    <ligand>
        <name>L-methionine</name>
        <dbReference type="ChEBI" id="CHEBI:57844"/>
        <note>ligand shared between two neighboring subunits</note>
    </ligand>
</feature>
<feature type="binding site" description="in other chain" evidence="1">
    <location>
        <position position="103"/>
    </location>
    <ligand>
        <name>L-methionine</name>
        <dbReference type="ChEBI" id="CHEBI:57844"/>
        <note>ligand shared between two neighboring subunits</note>
    </ligand>
</feature>
<feature type="binding site" description="in other chain" evidence="1">
    <location>
        <begin position="168"/>
        <end position="170"/>
    </location>
    <ligand>
        <name>ATP</name>
        <dbReference type="ChEBI" id="CHEBI:30616"/>
        <note>ligand shared between two neighboring subunits</note>
    </ligand>
</feature>
<feature type="binding site" description="in other chain" evidence="1">
    <location>
        <begin position="234"/>
        <end position="235"/>
    </location>
    <ligand>
        <name>ATP</name>
        <dbReference type="ChEBI" id="CHEBI:30616"/>
        <note>ligand shared between two neighboring subunits</note>
    </ligand>
</feature>
<feature type="binding site" evidence="1">
    <location>
        <position position="243"/>
    </location>
    <ligand>
        <name>ATP</name>
        <dbReference type="ChEBI" id="CHEBI:30616"/>
        <note>ligand shared between two neighboring subunits</note>
    </ligand>
</feature>
<feature type="binding site" evidence="1">
    <location>
        <position position="243"/>
    </location>
    <ligand>
        <name>L-methionine</name>
        <dbReference type="ChEBI" id="CHEBI:57844"/>
        <note>ligand shared between two neighboring subunits</note>
    </ligand>
</feature>
<feature type="binding site" description="in other chain" evidence="1">
    <location>
        <begin position="249"/>
        <end position="250"/>
    </location>
    <ligand>
        <name>ATP</name>
        <dbReference type="ChEBI" id="CHEBI:30616"/>
        <note>ligand shared between two neighboring subunits</note>
    </ligand>
</feature>
<feature type="binding site" evidence="1">
    <location>
        <position position="266"/>
    </location>
    <ligand>
        <name>ATP</name>
        <dbReference type="ChEBI" id="CHEBI:30616"/>
        <note>ligand shared between two neighboring subunits</note>
    </ligand>
</feature>
<feature type="binding site" evidence="1">
    <location>
        <position position="270"/>
    </location>
    <ligand>
        <name>ATP</name>
        <dbReference type="ChEBI" id="CHEBI:30616"/>
        <note>ligand shared between two neighboring subunits</note>
    </ligand>
</feature>
<feature type="binding site" description="in other chain" evidence="1">
    <location>
        <position position="274"/>
    </location>
    <ligand>
        <name>L-methionine</name>
        <dbReference type="ChEBI" id="CHEBI:57844"/>
        <note>ligand shared between two neighboring subunits</note>
    </ligand>
</feature>
<sequence length="389" mass="42234">MINAKGRYLFSSESVTEGHPDKVADQISDGILDAILAQDPDAHVACETLVTTGLAFIAGEITTKAYADFPSIVRETVKEIGYNSSTMGFDWETCAVISSVDKQSVDIAQGVSRTKPEDQGAGDQGMMFGFACDETETLMPAPIYWAHKLSRRLTEVRKSGVLDFLRPDGKTQVAVEYVDGKPVRIDNVVVASQHAENISHADLCDAVKKEVIFHTLPESLVDKNTKIYINTTGRFVIGGPMGDCGLTGRKIIQDTYGGMGNHGGGAFSGKDPSKVDRSGAYMARYVAKNMVASGACKRCEVQIAYCIGVAEPLSVLVTSMGSSDIPDEALTKAVREVFDLRPYYISKRLDLKRPIYKPTSCYGHFGREQAGFTWEVTDAAADLRTALKI</sequence>
<accession>C4XPZ6</accession>
<protein>
    <recommendedName>
        <fullName evidence="1">S-adenosylmethionine synthase</fullName>
        <shortName evidence="1">AdoMet synthase</shortName>
        <ecNumber evidence="1">2.5.1.6</ecNumber>
    </recommendedName>
    <alternativeName>
        <fullName evidence="1">MAT</fullName>
    </alternativeName>
    <alternativeName>
        <fullName evidence="1">Methionine adenosyltransferase</fullName>
    </alternativeName>
</protein>
<name>METK_SOLM1</name>
<evidence type="ECO:0000255" key="1">
    <source>
        <dbReference type="HAMAP-Rule" id="MF_00086"/>
    </source>
</evidence>
<reference key="1">
    <citation type="journal article" date="2009" name="Genome Res.">
        <title>Whole genome sequence of Desulfovibrio magneticus strain RS-1 revealed common gene clusters in magnetotactic bacteria.</title>
        <authorList>
            <person name="Nakazawa H."/>
            <person name="Arakaki A."/>
            <person name="Narita-Yamada S."/>
            <person name="Yashiro I."/>
            <person name="Jinno K."/>
            <person name="Aoki N."/>
            <person name="Tsuruyama A."/>
            <person name="Okamura Y."/>
            <person name="Tanikawa S."/>
            <person name="Fujita N."/>
            <person name="Takeyama H."/>
            <person name="Matsunaga T."/>
        </authorList>
    </citation>
    <scope>NUCLEOTIDE SEQUENCE [LARGE SCALE GENOMIC DNA]</scope>
    <source>
        <strain>ATCC 700980 / DSM 13731 / RS-1</strain>
    </source>
</reference>
<organism>
    <name type="scientific">Solidesulfovibrio magneticus (strain ATCC 700980 / DSM 13731 / RS-1)</name>
    <name type="common">Desulfovibrio magneticus</name>
    <dbReference type="NCBI Taxonomy" id="573370"/>
    <lineage>
        <taxon>Bacteria</taxon>
        <taxon>Pseudomonadati</taxon>
        <taxon>Thermodesulfobacteriota</taxon>
        <taxon>Desulfovibrionia</taxon>
        <taxon>Desulfovibrionales</taxon>
        <taxon>Desulfovibrionaceae</taxon>
        <taxon>Solidesulfovibrio</taxon>
    </lineage>
</organism>